<accession>C1DD88</accession>
<reference key="1">
    <citation type="journal article" date="2009" name="PLoS Genet.">
        <title>The complete genome and proteome of Laribacter hongkongensis reveal potential mechanisms for adaptations to different temperatures and habitats.</title>
        <authorList>
            <person name="Woo P.C.Y."/>
            <person name="Lau S.K.P."/>
            <person name="Tse H."/>
            <person name="Teng J.L.L."/>
            <person name="Curreem S.O."/>
            <person name="Tsang A.K.L."/>
            <person name="Fan R.Y.Y."/>
            <person name="Wong G.K.M."/>
            <person name="Huang Y."/>
            <person name="Loman N.J."/>
            <person name="Snyder L.A.S."/>
            <person name="Cai J.J."/>
            <person name="Huang J.-D."/>
            <person name="Mak W."/>
            <person name="Pallen M.J."/>
            <person name="Lok S."/>
            <person name="Yuen K.-Y."/>
        </authorList>
    </citation>
    <scope>NUCLEOTIDE SEQUENCE [LARGE SCALE GENOMIC DNA]</scope>
    <source>
        <strain>HLHK9</strain>
    </source>
</reference>
<keyword id="KW-0067">ATP-binding</keyword>
<keyword id="KW-0143">Chaperone</keyword>
<keyword id="KW-0547">Nucleotide-binding</keyword>
<keyword id="KW-0597">Phosphoprotein</keyword>
<keyword id="KW-1185">Reference proteome</keyword>
<keyword id="KW-0346">Stress response</keyword>
<feature type="chain" id="PRO_1000133149" description="Chaperone protein DnaK">
    <location>
        <begin position="1"/>
        <end position="642"/>
    </location>
</feature>
<feature type="region of interest" description="Disordered" evidence="2">
    <location>
        <begin position="608"/>
        <end position="642"/>
    </location>
</feature>
<feature type="compositionally biased region" description="Low complexity" evidence="2">
    <location>
        <begin position="608"/>
        <end position="618"/>
    </location>
</feature>
<feature type="modified residue" description="Phosphothreonine; by autocatalysis" evidence="1">
    <location>
        <position position="200"/>
    </location>
</feature>
<name>DNAK_LARHH</name>
<protein>
    <recommendedName>
        <fullName evidence="1">Chaperone protein DnaK</fullName>
    </recommendedName>
    <alternativeName>
        <fullName evidence="1">HSP70</fullName>
    </alternativeName>
    <alternativeName>
        <fullName evidence="1">Heat shock 70 kDa protein</fullName>
    </alternativeName>
    <alternativeName>
        <fullName evidence="1">Heat shock protein 70</fullName>
    </alternativeName>
</protein>
<organism>
    <name type="scientific">Laribacter hongkongensis (strain HLHK9)</name>
    <dbReference type="NCBI Taxonomy" id="557598"/>
    <lineage>
        <taxon>Bacteria</taxon>
        <taxon>Pseudomonadati</taxon>
        <taxon>Pseudomonadota</taxon>
        <taxon>Betaproteobacteria</taxon>
        <taxon>Neisseriales</taxon>
        <taxon>Aquaspirillaceae</taxon>
        <taxon>Laribacter</taxon>
    </lineage>
</organism>
<dbReference type="EMBL" id="CP001154">
    <property type="protein sequence ID" value="ACO75720.1"/>
    <property type="molecule type" value="Genomic_DNA"/>
</dbReference>
<dbReference type="RefSeq" id="WP_012698183.1">
    <property type="nucleotide sequence ID" value="NC_012559.1"/>
</dbReference>
<dbReference type="SMR" id="C1DD88"/>
<dbReference type="STRING" id="557598.LHK_02739"/>
<dbReference type="KEGG" id="lhk:LHK_02739"/>
<dbReference type="eggNOG" id="COG0443">
    <property type="taxonomic scope" value="Bacteria"/>
</dbReference>
<dbReference type="HOGENOM" id="CLU_005965_2_4_4"/>
<dbReference type="Proteomes" id="UP000002010">
    <property type="component" value="Chromosome"/>
</dbReference>
<dbReference type="GO" id="GO:0005524">
    <property type="term" value="F:ATP binding"/>
    <property type="evidence" value="ECO:0007669"/>
    <property type="project" value="UniProtKB-UniRule"/>
</dbReference>
<dbReference type="GO" id="GO:0140662">
    <property type="term" value="F:ATP-dependent protein folding chaperone"/>
    <property type="evidence" value="ECO:0007669"/>
    <property type="project" value="InterPro"/>
</dbReference>
<dbReference type="GO" id="GO:0051082">
    <property type="term" value="F:unfolded protein binding"/>
    <property type="evidence" value="ECO:0007669"/>
    <property type="project" value="InterPro"/>
</dbReference>
<dbReference type="CDD" id="cd10234">
    <property type="entry name" value="ASKHA_NBD_HSP70_DnaK-like"/>
    <property type="match status" value="1"/>
</dbReference>
<dbReference type="FunFam" id="2.60.34.10:FF:000014">
    <property type="entry name" value="Chaperone protein DnaK HSP70"/>
    <property type="match status" value="1"/>
</dbReference>
<dbReference type="FunFam" id="3.30.30.30:FF:000003">
    <property type="entry name" value="Heat shock protein 9"/>
    <property type="match status" value="1"/>
</dbReference>
<dbReference type="FunFam" id="1.20.1270.10:FF:000001">
    <property type="entry name" value="Molecular chaperone DnaK"/>
    <property type="match status" value="1"/>
</dbReference>
<dbReference type="FunFam" id="3.30.420.40:FF:000004">
    <property type="entry name" value="Molecular chaperone DnaK"/>
    <property type="match status" value="1"/>
</dbReference>
<dbReference type="FunFam" id="3.90.640.10:FF:000003">
    <property type="entry name" value="Molecular chaperone DnaK"/>
    <property type="match status" value="1"/>
</dbReference>
<dbReference type="Gene3D" id="1.20.1270.10">
    <property type="match status" value="1"/>
</dbReference>
<dbReference type="Gene3D" id="3.30.420.40">
    <property type="match status" value="2"/>
</dbReference>
<dbReference type="Gene3D" id="3.90.640.10">
    <property type="entry name" value="Actin, Chain A, domain 4"/>
    <property type="match status" value="1"/>
</dbReference>
<dbReference type="Gene3D" id="2.60.34.10">
    <property type="entry name" value="Substrate Binding Domain Of DNAk, Chain A, domain 1"/>
    <property type="match status" value="1"/>
</dbReference>
<dbReference type="HAMAP" id="MF_00332">
    <property type="entry name" value="DnaK"/>
    <property type="match status" value="1"/>
</dbReference>
<dbReference type="InterPro" id="IPR043129">
    <property type="entry name" value="ATPase_NBD"/>
</dbReference>
<dbReference type="InterPro" id="IPR012725">
    <property type="entry name" value="Chaperone_DnaK"/>
</dbReference>
<dbReference type="InterPro" id="IPR018181">
    <property type="entry name" value="Heat_shock_70_CS"/>
</dbReference>
<dbReference type="InterPro" id="IPR029048">
    <property type="entry name" value="HSP70_C_sf"/>
</dbReference>
<dbReference type="InterPro" id="IPR029047">
    <property type="entry name" value="HSP70_peptide-bd_sf"/>
</dbReference>
<dbReference type="InterPro" id="IPR013126">
    <property type="entry name" value="Hsp_70_fam"/>
</dbReference>
<dbReference type="NCBIfam" id="NF001413">
    <property type="entry name" value="PRK00290.1"/>
    <property type="match status" value="1"/>
</dbReference>
<dbReference type="NCBIfam" id="NF003520">
    <property type="entry name" value="PRK05183.1"/>
    <property type="match status" value="1"/>
</dbReference>
<dbReference type="NCBIfam" id="TIGR02350">
    <property type="entry name" value="prok_dnaK"/>
    <property type="match status" value="1"/>
</dbReference>
<dbReference type="PANTHER" id="PTHR19375">
    <property type="entry name" value="HEAT SHOCK PROTEIN 70KDA"/>
    <property type="match status" value="1"/>
</dbReference>
<dbReference type="Pfam" id="PF00012">
    <property type="entry name" value="HSP70"/>
    <property type="match status" value="1"/>
</dbReference>
<dbReference type="PRINTS" id="PR00301">
    <property type="entry name" value="HEATSHOCK70"/>
</dbReference>
<dbReference type="SUPFAM" id="SSF53067">
    <property type="entry name" value="Actin-like ATPase domain"/>
    <property type="match status" value="2"/>
</dbReference>
<dbReference type="SUPFAM" id="SSF100934">
    <property type="entry name" value="Heat shock protein 70kD (HSP70), C-terminal subdomain"/>
    <property type="match status" value="1"/>
</dbReference>
<dbReference type="SUPFAM" id="SSF100920">
    <property type="entry name" value="Heat shock protein 70kD (HSP70), peptide-binding domain"/>
    <property type="match status" value="1"/>
</dbReference>
<dbReference type="PROSITE" id="PS00297">
    <property type="entry name" value="HSP70_1"/>
    <property type="match status" value="1"/>
</dbReference>
<dbReference type="PROSITE" id="PS00329">
    <property type="entry name" value="HSP70_2"/>
    <property type="match status" value="1"/>
</dbReference>
<dbReference type="PROSITE" id="PS01036">
    <property type="entry name" value="HSP70_3"/>
    <property type="match status" value="1"/>
</dbReference>
<comment type="function">
    <text evidence="1">Acts as a chaperone.</text>
</comment>
<comment type="induction">
    <text evidence="1">By stress conditions e.g. heat shock.</text>
</comment>
<comment type="similarity">
    <text evidence="1">Belongs to the heat shock protein 70 family.</text>
</comment>
<sequence>MGKIIGIDLGTTNSCVAVLENGQPKVIENSEGARTTPSVVAYMEDGEILVGAPAKRQAVTNAKNTIFASKRLIGRRFEEKEVQKDIDLMPFSIVKADNGDAWIDVRGKKLAPPQISAEVLRKMKKTAEDYLGEEVTEAVITVPAYFNDSQRQATKDAGRIAGLEVKRIINEPTAAALAFGMDKSEKGDKKIAVYDLGGGTFDISIIEIADVDGEKQFEVLATNGDTFLGGEDFDQRLIDYIVTEFKKEQGVDLKNDVMALQRLKEAAEKAKIELSSGQQTEINLPYITMDATGPKHLTMKITRAKFESLVDELIERSIEPCRVAIKDAGLKVSDIDDVILVGGQSRMPKVQEAVKTFFGKEPRRDVNPDEAVAVGAAIQGSVLSGERKDLLLLDVTPLSLGIETMGGIMTKLIQKNTTIPTKATQVFSTADDNQTAVTIHVLQGEREKAAANKSLGQFNLSDIPPAPRGLPQIEVTFDIDANGILHVSAKDKATGKQANITIQASSGLSEAEIEKMVRDAELNAEEDKKLAELVQARNQAEGLIHSVKKSLADYGDKIGSDEKARIEAAIKDAEEAVKGEDKAAIEAKSEELAKASQKLGEIMYAQAQAESQAAGEGQPDAGKKDDGNVVDAEFEEVKKDKQ</sequence>
<gene>
    <name evidence="1" type="primary">dnaK</name>
    <name type="ordered locus">LHK_02739</name>
</gene>
<evidence type="ECO:0000255" key="1">
    <source>
        <dbReference type="HAMAP-Rule" id="MF_00332"/>
    </source>
</evidence>
<evidence type="ECO:0000256" key="2">
    <source>
        <dbReference type="SAM" id="MobiDB-lite"/>
    </source>
</evidence>
<proteinExistence type="inferred from homology"/>